<gene>
    <name evidence="1" type="primary">engB</name>
    <name type="ordered locus">Bcen2424_0379</name>
</gene>
<sequence length="219" mass="24359">MAFLLHQARFYTTVNHLRDLPPTVQPEIAFAGRSNAGKSTAINVLCNQKRLAFASKTPGRTQHINYFSVGPAAEPVANLVDLPGYGYAEVPGAAKAHWEMLLSSYLATRSQLCGLILMMDSRRPLTDLDRRMIEWFAPTGKPIHTLLTKCDKLTRQESINALRNTQKGLDAYRDQGVKGKLTVQLFSALKRTGLDEAHELIESWLRPSVADEKSEPVAQ</sequence>
<accession>A0K3Q6</accession>
<protein>
    <recommendedName>
        <fullName evidence="1">Probable GTP-binding protein EngB</fullName>
    </recommendedName>
</protein>
<evidence type="ECO:0000255" key="1">
    <source>
        <dbReference type="HAMAP-Rule" id="MF_00321"/>
    </source>
</evidence>
<dbReference type="EMBL" id="CP000458">
    <property type="protein sequence ID" value="ABK07133.1"/>
    <property type="molecule type" value="Genomic_DNA"/>
</dbReference>
<dbReference type="SMR" id="A0K3Q6"/>
<dbReference type="KEGG" id="bch:Bcen2424_0379"/>
<dbReference type="HOGENOM" id="CLU_033732_1_1_4"/>
<dbReference type="GO" id="GO:0005829">
    <property type="term" value="C:cytosol"/>
    <property type="evidence" value="ECO:0007669"/>
    <property type="project" value="TreeGrafter"/>
</dbReference>
<dbReference type="GO" id="GO:0005525">
    <property type="term" value="F:GTP binding"/>
    <property type="evidence" value="ECO:0007669"/>
    <property type="project" value="UniProtKB-UniRule"/>
</dbReference>
<dbReference type="GO" id="GO:0046872">
    <property type="term" value="F:metal ion binding"/>
    <property type="evidence" value="ECO:0007669"/>
    <property type="project" value="UniProtKB-KW"/>
</dbReference>
<dbReference type="GO" id="GO:0000917">
    <property type="term" value="P:division septum assembly"/>
    <property type="evidence" value="ECO:0007669"/>
    <property type="project" value="UniProtKB-KW"/>
</dbReference>
<dbReference type="CDD" id="cd01876">
    <property type="entry name" value="YihA_EngB"/>
    <property type="match status" value="1"/>
</dbReference>
<dbReference type="FunFam" id="3.40.50.300:FF:000098">
    <property type="entry name" value="Probable GTP-binding protein EngB"/>
    <property type="match status" value="1"/>
</dbReference>
<dbReference type="Gene3D" id="3.40.50.300">
    <property type="entry name" value="P-loop containing nucleotide triphosphate hydrolases"/>
    <property type="match status" value="1"/>
</dbReference>
<dbReference type="HAMAP" id="MF_00321">
    <property type="entry name" value="GTPase_EngB"/>
    <property type="match status" value="1"/>
</dbReference>
<dbReference type="InterPro" id="IPR030393">
    <property type="entry name" value="G_ENGB_dom"/>
</dbReference>
<dbReference type="InterPro" id="IPR006073">
    <property type="entry name" value="GTP-bd"/>
</dbReference>
<dbReference type="InterPro" id="IPR019987">
    <property type="entry name" value="GTP-bd_ribosome_bio_YsxC"/>
</dbReference>
<dbReference type="InterPro" id="IPR027417">
    <property type="entry name" value="P-loop_NTPase"/>
</dbReference>
<dbReference type="NCBIfam" id="TIGR03598">
    <property type="entry name" value="GTPase_YsxC"/>
    <property type="match status" value="1"/>
</dbReference>
<dbReference type="PANTHER" id="PTHR11649:SF13">
    <property type="entry name" value="ENGB-TYPE G DOMAIN-CONTAINING PROTEIN"/>
    <property type="match status" value="1"/>
</dbReference>
<dbReference type="PANTHER" id="PTHR11649">
    <property type="entry name" value="MSS1/TRME-RELATED GTP-BINDING PROTEIN"/>
    <property type="match status" value="1"/>
</dbReference>
<dbReference type="Pfam" id="PF01926">
    <property type="entry name" value="MMR_HSR1"/>
    <property type="match status" value="1"/>
</dbReference>
<dbReference type="SUPFAM" id="SSF52540">
    <property type="entry name" value="P-loop containing nucleoside triphosphate hydrolases"/>
    <property type="match status" value="1"/>
</dbReference>
<dbReference type="PROSITE" id="PS51706">
    <property type="entry name" value="G_ENGB"/>
    <property type="match status" value="1"/>
</dbReference>
<comment type="function">
    <text evidence="1">Necessary for normal cell division and for the maintenance of normal septation.</text>
</comment>
<comment type="cofactor">
    <cofactor evidence="1">
        <name>Mg(2+)</name>
        <dbReference type="ChEBI" id="CHEBI:18420"/>
    </cofactor>
</comment>
<comment type="similarity">
    <text evidence="1">Belongs to the TRAFAC class TrmE-Era-EngA-EngB-Septin-like GTPase superfamily. EngB GTPase family.</text>
</comment>
<proteinExistence type="inferred from homology"/>
<organism>
    <name type="scientific">Burkholderia cenocepacia (strain HI2424)</name>
    <dbReference type="NCBI Taxonomy" id="331272"/>
    <lineage>
        <taxon>Bacteria</taxon>
        <taxon>Pseudomonadati</taxon>
        <taxon>Pseudomonadota</taxon>
        <taxon>Betaproteobacteria</taxon>
        <taxon>Burkholderiales</taxon>
        <taxon>Burkholderiaceae</taxon>
        <taxon>Burkholderia</taxon>
        <taxon>Burkholderia cepacia complex</taxon>
    </lineage>
</organism>
<keyword id="KW-0131">Cell cycle</keyword>
<keyword id="KW-0132">Cell division</keyword>
<keyword id="KW-0342">GTP-binding</keyword>
<keyword id="KW-0460">Magnesium</keyword>
<keyword id="KW-0479">Metal-binding</keyword>
<keyword id="KW-0547">Nucleotide-binding</keyword>
<keyword id="KW-0717">Septation</keyword>
<name>ENGB_BURCH</name>
<reference key="1">
    <citation type="submission" date="2006-08" db="EMBL/GenBank/DDBJ databases">
        <title>Complete sequence of chromosome 1 of Burkholderia cenocepacia HI2424.</title>
        <authorList>
            <person name="Copeland A."/>
            <person name="Lucas S."/>
            <person name="Lapidus A."/>
            <person name="Barry K."/>
            <person name="Detter J.C."/>
            <person name="Glavina del Rio T."/>
            <person name="Hammon N."/>
            <person name="Israni S."/>
            <person name="Pitluck S."/>
            <person name="Chain P."/>
            <person name="Malfatti S."/>
            <person name="Shin M."/>
            <person name="Vergez L."/>
            <person name="Schmutz J."/>
            <person name="Larimer F."/>
            <person name="Land M."/>
            <person name="Hauser L."/>
            <person name="Kyrpides N."/>
            <person name="Kim E."/>
            <person name="LiPuma J.J."/>
            <person name="Gonzalez C.F."/>
            <person name="Konstantinidis K."/>
            <person name="Tiedje J.M."/>
            <person name="Richardson P."/>
        </authorList>
    </citation>
    <scope>NUCLEOTIDE SEQUENCE [LARGE SCALE GENOMIC DNA]</scope>
    <source>
        <strain>HI2424</strain>
    </source>
</reference>
<feature type="chain" id="PRO_1000005802" description="Probable GTP-binding protein EngB">
    <location>
        <begin position="1"/>
        <end position="219"/>
    </location>
</feature>
<feature type="domain" description="EngB-type G" evidence="1">
    <location>
        <begin position="24"/>
        <end position="207"/>
    </location>
</feature>
<feature type="binding site" evidence="1">
    <location>
        <begin position="32"/>
        <end position="39"/>
    </location>
    <ligand>
        <name>GTP</name>
        <dbReference type="ChEBI" id="CHEBI:37565"/>
    </ligand>
</feature>
<feature type="binding site" evidence="1">
    <location>
        <position position="39"/>
    </location>
    <ligand>
        <name>Mg(2+)</name>
        <dbReference type="ChEBI" id="CHEBI:18420"/>
    </ligand>
</feature>
<feature type="binding site" evidence="1">
    <location>
        <begin position="59"/>
        <end position="63"/>
    </location>
    <ligand>
        <name>GTP</name>
        <dbReference type="ChEBI" id="CHEBI:37565"/>
    </ligand>
</feature>
<feature type="binding site" evidence="1">
    <location>
        <position position="61"/>
    </location>
    <ligand>
        <name>Mg(2+)</name>
        <dbReference type="ChEBI" id="CHEBI:18420"/>
    </ligand>
</feature>
<feature type="binding site" evidence="1">
    <location>
        <begin position="81"/>
        <end position="84"/>
    </location>
    <ligand>
        <name>GTP</name>
        <dbReference type="ChEBI" id="CHEBI:37565"/>
    </ligand>
</feature>
<feature type="binding site" evidence="1">
    <location>
        <begin position="148"/>
        <end position="151"/>
    </location>
    <ligand>
        <name>GTP</name>
        <dbReference type="ChEBI" id="CHEBI:37565"/>
    </ligand>
</feature>
<feature type="binding site" evidence="1">
    <location>
        <begin position="186"/>
        <end position="188"/>
    </location>
    <ligand>
        <name>GTP</name>
        <dbReference type="ChEBI" id="CHEBI:37565"/>
    </ligand>
</feature>